<feature type="chain" id="PRO_0000337436" description="Elongation factor Tu">
    <location>
        <begin position="1"/>
        <end position="402"/>
    </location>
</feature>
<feature type="domain" description="tr-type G">
    <location>
        <begin position="16"/>
        <end position="211"/>
    </location>
</feature>
<feature type="region of interest" description="G1" evidence="1">
    <location>
        <begin position="25"/>
        <end position="32"/>
    </location>
</feature>
<feature type="region of interest" description="G2" evidence="1">
    <location>
        <begin position="66"/>
        <end position="70"/>
    </location>
</feature>
<feature type="region of interest" description="G3" evidence="1">
    <location>
        <begin position="87"/>
        <end position="90"/>
    </location>
</feature>
<feature type="region of interest" description="G4" evidence="1">
    <location>
        <begin position="142"/>
        <end position="145"/>
    </location>
</feature>
<feature type="region of interest" description="G5" evidence="1">
    <location>
        <begin position="181"/>
        <end position="183"/>
    </location>
</feature>
<feature type="binding site" evidence="2">
    <location>
        <begin position="25"/>
        <end position="32"/>
    </location>
    <ligand>
        <name>GTP</name>
        <dbReference type="ChEBI" id="CHEBI:37565"/>
    </ligand>
</feature>
<feature type="binding site" evidence="2">
    <location>
        <position position="32"/>
    </location>
    <ligand>
        <name>Mg(2+)</name>
        <dbReference type="ChEBI" id="CHEBI:18420"/>
    </ligand>
</feature>
<feature type="binding site" evidence="2">
    <location>
        <begin position="87"/>
        <end position="91"/>
    </location>
    <ligand>
        <name>GTP</name>
        <dbReference type="ChEBI" id="CHEBI:37565"/>
    </ligand>
</feature>
<feature type="binding site" evidence="2">
    <location>
        <begin position="142"/>
        <end position="145"/>
    </location>
    <ligand>
        <name>GTP</name>
        <dbReference type="ChEBI" id="CHEBI:37565"/>
    </ligand>
</feature>
<reference key="1">
    <citation type="journal article" date="2005" name="J. Bacteriol.">
        <title>Swine and poultry pathogens: the complete genome sequences of two strains of Mycoplasma hyopneumoniae and a strain of Mycoplasma synoviae.</title>
        <authorList>
            <person name="Vasconcelos A.T.R."/>
            <person name="Ferreira H.B."/>
            <person name="Bizarro C.V."/>
            <person name="Bonatto S.L."/>
            <person name="Carvalho M.O."/>
            <person name="Pinto P.M."/>
            <person name="Almeida D.F."/>
            <person name="Almeida L.G.P."/>
            <person name="Almeida R."/>
            <person name="Alves-Junior L."/>
            <person name="Assuncao E.N."/>
            <person name="Azevedo V.A.C."/>
            <person name="Bogo M.R."/>
            <person name="Brigido M.M."/>
            <person name="Brocchi M."/>
            <person name="Burity H.A."/>
            <person name="Camargo A.A."/>
            <person name="Camargo S.S."/>
            <person name="Carepo M.S."/>
            <person name="Carraro D.M."/>
            <person name="de Mattos Cascardo J.C."/>
            <person name="Castro L.A."/>
            <person name="Cavalcanti G."/>
            <person name="Chemale G."/>
            <person name="Collevatti R.G."/>
            <person name="Cunha C.W."/>
            <person name="Dallagiovanna B."/>
            <person name="Dambros B.P."/>
            <person name="Dellagostin O.A."/>
            <person name="Falcao C."/>
            <person name="Fantinatti-Garboggini F."/>
            <person name="Felipe M.S.S."/>
            <person name="Fiorentin L."/>
            <person name="Franco G.R."/>
            <person name="Freitas N.S.A."/>
            <person name="Frias D."/>
            <person name="Grangeiro T.B."/>
            <person name="Grisard E.C."/>
            <person name="Guimaraes C.T."/>
            <person name="Hungria M."/>
            <person name="Jardim S.N."/>
            <person name="Krieger M.A."/>
            <person name="Laurino J.P."/>
            <person name="Lima L.F.A."/>
            <person name="Lopes M.I."/>
            <person name="Loreto E.L.S."/>
            <person name="Madeira H.M.F."/>
            <person name="Manfio G.P."/>
            <person name="Maranhao A.Q."/>
            <person name="Martinkovics C.T."/>
            <person name="Medeiros S.R.B."/>
            <person name="Moreira M.A.M."/>
            <person name="Neiva M."/>
            <person name="Ramalho-Neto C.E."/>
            <person name="Nicolas M.F."/>
            <person name="Oliveira S.C."/>
            <person name="Paixao R.F.C."/>
            <person name="Pedrosa F.O."/>
            <person name="Pena S.D.J."/>
            <person name="Pereira M."/>
            <person name="Pereira-Ferrari L."/>
            <person name="Piffer I."/>
            <person name="Pinto L.S."/>
            <person name="Potrich D.P."/>
            <person name="Salim A.C.M."/>
            <person name="Santos F.R."/>
            <person name="Schmitt R."/>
            <person name="Schneider M.P.C."/>
            <person name="Schrank A."/>
            <person name="Schrank I.S."/>
            <person name="Schuck A.F."/>
            <person name="Seuanez H.N."/>
            <person name="Silva D.W."/>
            <person name="Silva R."/>
            <person name="Silva S.C."/>
            <person name="Soares C.M.A."/>
            <person name="Souza K.R.L."/>
            <person name="Souza R.C."/>
            <person name="Staats C.C."/>
            <person name="Steffens M.B.R."/>
            <person name="Teixeira S.M.R."/>
            <person name="Urmenyi T.P."/>
            <person name="Vainstein M.H."/>
            <person name="Zuccherato L.W."/>
            <person name="Simpson A.J.G."/>
            <person name="Zaha A."/>
        </authorList>
    </citation>
    <scope>NUCLEOTIDE SEQUENCE [LARGE SCALE GENOMIC DNA]</scope>
    <source>
        <strain>7448</strain>
    </source>
</reference>
<name>EFTU_MESH7</name>
<organism>
    <name type="scientific">Mesomycoplasma hyopneumoniae (strain 7448)</name>
    <name type="common">Mycoplasma hyopneumoniae</name>
    <dbReference type="NCBI Taxonomy" id="262722"/>
    <lineage>
        <taxon>Bacteria</taxon>
        <taxon>Bacillati</taxon>
        <taxon>Mycoplasmatota</taxon>
        <taxon>Mycoplasmoidales</taxon>
        <taxon>Metamycoplasmataceae</taxon>
        <taxon>Mesomycoplasma</taxon>
    </lineage>
</organism>
<proteinExistence type="inferred from homology"/>
<gene>
    <name evidence="2" type="primary">tuf</name>
    <name type="synonym">tufA</name>
    <name type="ordered locus">MHP7448_0523</name>
</gene>
<accession>Q4A7K0</accession>
<comment type="function">
    <text evidence="2">GTP hydrolase that promotes the GTP-dependent binding of aminoacyl-tRNA to the A-site of ribosomes during protein biosynthesis.</text>
</comment>
<comment type="catalytic activity">
    <reaction evidence="2">
        <text>GTP + H2O = GDP + phosphate + H(+)</text>
        <dbReference type="Rhea" id="RHEA:19669"/>
        <dbReference type="ChEBI" id="CHEBI:15377"/>
        <dbReference type="ChEBI" id="CHEBI:15378"/>
        <dbReference type="ChEBI" id="CHEBI:37565"/>
        <dbReference type="ChEBI" id="CHEBI:43474"/>
        <dbReference type="ChEBI" id="CHEBI:58189"/>
        <dbReference type="EC" id="3.6.5.3"/>
    </reaction>
    <physiologicalReaction direction="left-to-right" evidence="2">
        <dbReference type="Rhea" id="RHEA:19670"/>
    </physiologicalReaction>
</comment>
<comment type="subunit">
    <text evidence="2">Monomer.</text>
</comment>
<comment type="subcellular location">
    <subcellularLocation>
        <location evidence="2">Cytoplasm</location>
    </subcellularLocation>
</comment>
<comment type="similarity">
    <text evidence="2">Belongs to the TRAFAC class translation factor GTPase superfamily. Classic translation factor GTPase family. EF-Tu/EF-1A subfamily.</text>
</comment>
<sequence>MAVVKTTGKKDFDRSKEHINIGTIGHVDHGKTTLTAAISTVLAKKGLAEAKDYASIDAAPEEKARGITINTAHIEYSTDKRHYAHVDCPGHADYIKNMITGAAQMDGAILVVAATDGPMPQTREHILLSKQVGVPKMVVFLNKIDLLEGEEEMVDLVEVEIRELLSSYDFDGDNTPIIRGSARGALEGKPEWEAKVLELMDAVDSYIDSPVREMDKPFLMAVEDVFTITGRGTVATGKVERGQVKLNEEVEIVGYREEPKKTVITGIEMFNKNLQTAMAGDNAGVLLRGVDRKDIERGQVIAKPKTIIPHTKFKAAIYALKKEEGGRHTPFFKNYKPQFYFRTTDVTGGIEFEPGREMVIPGDNVDLTVELIAPIAVEQGTKFSIREGGRTVGAGTVTEIIK</sequence>
<keyword id="KW-0963">Cytoplasm</keyword>
<keyword id="KW-0251">Elongation factor</keyword>
<keyword id="KW-0342">GTP-binding</keyword>
<keyword id="KW-0378">Hydrolase</keyword>
<keyword id="KW-0460">Magnesium</keyword>
<keyword id="KW-0479">Metal-binding</keyword>
<keyword id="KW-0547">Nucleotide-binding</keyword>
<keyword id="KW-0648">Protein biosynthesis</keyword>
<evidence type="ECO:0000250" key="1"/>
<evidence type="ECO:0000255" key="2">
    <source>
        <dbReference type="HAMAP-Rule" id="MF_00118"/>
    </source>
</evidence>
<dbReference type="EC" id="3.6.5.3" evidence="2"/>
<dbReference type="EMBL" id="AE017244">
    <property type="protein sequence ID" value="AAZ53889.1"/>
    <property type="molecule type" value="Genomic_DNA"/>
</dbReference>
<dbReference type="RefSeq" id="WP_011206373.1">
    <property type="nucleotide sequence ID" value="NC_007332.1"/>
</dbReference>
<dbReference type="SMR" id="Q4A7K0"/>
<dbReference type="KEGG" id="mhp:MHP7448_0523"/>
<dbReference type="HOGENOM" id="CLU_007265_0_0_14"/>
<dbReference type="Proteomes" id="UP000000553">
    <property type="component" value="Chromosome"/>
</dbReference>
<dbReference type="GO" id="GO:0005829">
    <property type="term" value="C:cytosol"/>
    <property type="evidence" value="ECO:0007669"/>
    <property type="project" value="TreeGrafter"/>
</dbReference>
<dbReference type="GO" id="GO:0005525">
    <property type="term" value="F:GTP binding"/>
    <property type="evidence" value="ECO:0007669"/>
    <property type="project" value="UniProtKB-UniRule"/>
</dbReference>
<dbReference type="GO" id="GO:0003924">
    <property type="term" value="F:GTPase activity"/>
    <property type="evidence" value="ECO:0007669"/>
    <property type="project" value="InterPro"/>
</dbReference>
<dbReference type="GO" id="GO:0003746">
    <property type="term" value="F:translation elongation factor activity"/>
    <property type="evidence" value="ECO:0007669"/>
    <property type="project" value="UniProtKB-UniRule"/>
</dbReference>
<dbReference type="CDD" id="cd01884">
    <property type="entry name" value="EF_Tu"/>
    <property type="match status" value="1"/>
</dbReference>
<dbReference type="CDD" id="cd03697">
    <property type="entry name" value="EFTU_II"/>
    <property type="match status" value="1"/>
</dbReference>
<dbReference type="CDD" id="cd03707">
    <property type="entry name" value="EFTU_III"/>
    <property type="match status" value="1"/>
</dbReference>
<dbReference type="FunFam" id="2.40.30.10:FF:000001">
    <property type="entry name" value="Elongation factor Tu"/>
    <property type="match status" value="1"/>
</dbReference>
<dbReference type="FunFam" id="3.40.50.300:FF:000003">
    <property type="entry name" value="Elongation factor Tu"/>
    <property type="match status" value="1"/>
</dbReference>
<dbReference type="Gene3D" id="3.40.50.300">
    <property type="entry name" value="P-loop containing nucleotide triphosphate hydrolases"/>
    <property type="match status" value="1"/>
</dbReference>
<dbReference type="Gene3D" id="2.40.30.10">
    <property type="entry name" value="Translation factors"/>
    <property type="match status" value="2"/>
</dbReference>
<dbReference type="HAMAP" id="MF_00118_B">
    <property type="entry name" value="EF_Tu_B"/>
    <property type="match status" value="1"/>
</dbReference>
<dbReference type="InterPro" id="IPR041709">
    <property type="entry name" value="EF-Tu_GTP-bd"/>
</dbReference>
<dbReference type="InterPro" id="IPR050055">
    <property type="entry name" value="EF-Tu_GTPase"/>
</dbReference>
<dbReference type="InterPro" id="IPR004161">
    <property type="entry name" value="EFTu-like_2"/>
</dbReference>
<dbReference type="InterPro" id="IPR033720">
    <property type="entry name" value="EFTU_2"/>
</dbReference>
<dbReference type="InterPro" id="IPR031157">
    <property type="entry name" value="G_TR_CS"/>
</dbReference>
<dbReference type="InterPro" id="IPR027417">
    <property type="entry name" value="P-loop_NTPase"/>
</dbReference>
<dbReference type="InterPro" id="IPR005225">
    <property type="entry name" value="Small_GTP-bd"/>
</dbReference>
<dbReference type="InterPro" id="IPR000795">
    <property type="entry name" value="T_Tr_GTP-bd_dom"/>
</dbReference>
<dbReference type="InterPro" id="IPR009000">
    <property type="entry name" value="Transl_B-barrel_sf"/>
</dbReference>
<dbReference type="InterPro" id="IPR009001">
    <property type="entry name" value="Transl_elong_EF1A/Init_IF2_C"/>
</dbReference>
<dbReference type="InterPro" id="IPR004541">
    <property type="entry name" value="Transl_elong_EFTu/EF1A_bac/org"/>
</dbReference>
<dbReference type="InterPro" id="IPR004160">
    <property type="entry name" value="Transl_elong_EFTu/EF1A_C"/>
</dbReference>
<dbReference type="NCBIfam" id="TIGR00485">
    <property type="entry name" value="EF-Tu"/>
    <property type="match status" value="1"/>
</dbReference>
<dbReference type="NCBIfam" id="NF000766">
    <property type="entry name" value="PRK00049.1"/>
    <property type="match status" value="1"/>
</dbReference>
<dbReference type="NCBIfam" id="NF009372">
    <property type="entry name" value="PRK12735.1"/>
    <property type="match status" value="1"/>
</dbReference>
<dbReference type="NCBIfam" id="NF009373">
    <property type="entry name" value="PRK12736.1"/>
    <property type="match status" value="1"/>
</dbReference>
<dbReference type="NCBIfam" id="TIGR00231">
    <property type="entry name" value="small_GTP"/>
    <property type="match status" value="1"/>
</dbReference>
<dbReference type="PANTHER" id="PTHR43721:SF22">
    <property type="entry name" value="ELONGATION FACTOR TU, MITOCHONDRIAL"/>
    <property type="match status" value="1"/>
</dbReference>
<dbReference type="PANTHER" id="PTHR43721">
    <property type="entry name" value="ELONGATION FACTOR TU-RELATED"/>
    <property type="match status" value="1"/>
</dbReference>
<dbReference type="Pfam" id="PF00009">
    <property type="entry name" value="GTP_EFTU"/>
    <property type="match status" value="1"/>
</dbReference>
<dbReference type="Pfam" id="PF03144">
    <property type="entry name" value="GTP_EFTU_D2"/>
    <property type="match status" value="1"/>
</dbReference>
<dbReference type="Pfam" id="PF03143">
    <property type="entry name" value="GTP_EFTU_D3"/>
    <property type="match status" value="1"/>
</dbReference>
<dbReference type="PRINTS" id="PR00315">
    <property type="entry name" value="ELONGATNFCT"/>
</dbReference>
<dbReference type="SUPFAM" id="SSF50465">
    <property type="entry name" value="EF-Tu/eEF-1alpha/eIF2-gamma C-terminal domain"/>
    <property type="match status" value="1"/>
</dbReference>
<dbReference type="SUPFAM" id="SSF52540">
    <property type="entry name" value="P-loop containing nucleoside triphosphate hydrolases"/>
    <property type="match status" value="1"/>
</dbReference>
<dbReference type="SUPFAM" id="SSF50447">
    <property type="entry name" value="Translation proteins"/>
    <property type="match status" value="1"/>
</dbReference>
<dbReference type="PROSITE" id="PS00301">
    <property type="entry name" value="G_TR_1"/>
    <property type="match status" value="1"/>
</dbReference>
<dbReference type="PROSITE" id="PS51722">
    <property type="entry name" value="G_TR_2"/>
    <property type="match status" value="1"/>
</dbReference>
<protein>
    <recommendedName>
        <fullName evidence="2">Elongation factor Tu</fullName>
        <shortName evidence="2">EF-Tu</shortName>
        <ecNumber evidence="2">3.6.5.3</ecNumber>
    </recommendedName>
</protein>